<protein>
    <recommendedName>
        <fullName evidence="1">Exodeoxyribonuclease 7 large subunit</fullName>
        <ecNumber evidence="1">3.1.11.6</ecNumber>
    </recommendedName>
    <alternativeName>
        <fullName evidence="1">Exodeoxyribonuclease VII large subunit</fullName>
        <shortName evidence="1">Exonuclease VII large subunit</shortName>
    </alternativeName>
</protein>
<reference key="1">
    <citation type="journal article" date="1999" name="Science">
        <title>Genome sequence of the radioresistant bacterium Deinococcus radiodurans R1.</title>
        <authorList>
            <person name="White O."/>
            <person name="Eisen J.A."/>
            <person name="Heidelberg J.F."/>
            <person name="Hickey E.K."/>
            <person name="Peterson J.D."/>
            <person name="Dodson R.J."/>
            <person name="Haft D.H."/>
            <person name="Gwinn M.L."/>
            <person name="Nelson W.C."/>
            <person name="Richardson D.L."/>
            <person name="Moffat K.S."/>
            <person name="Qin H."/>
            <person name="Jiang L."/>
            <person name="Pamphile W."/>
            <person name="Crosby M."/>
            <person name="Shen M."/>
            <person name="Vamathevan J.J."/>
            <person name="Lam P."/>
            <person name="McDonald L.A."/>
            <person name="Utterback T.R."/>
            <person name="Zalewski C."/>
            <person name="Makarova K.S."/>
            <person name="Aravind L."/>
            <person name="Daly M.J."/>
            <person name="Minton K.W."/>
            <person name="Fleischmann R.D."/>
            <person name="Ketchum K.A."/>
            <person name="Nelson K.E."/>
            <person name="Salzberg S.L."/>
            <person name="Smith H.O."/>
            <person name="Venter J.C."/>
            <person name="Fraser C.M."/>
        </authorList>
    </citation>
    <scope>NUCLEOTIDE SEQUENCE [LARGE SCALE GENOMIC DNA]</scope>
    <source>
        <strain>ATCC 13939 / DSM 20539 / JCM 16871 / CCUG 27074 / LMG 4051 / NBRC 15346 / NCIMB 9279 / VKM B-1422 / R1</strain>
    </source>
</reference>
<gene>
    <name evidence="1" type="primary">xseA</name>
    <name type="ordered locus">DR_0186</name>
</gene>
<keyword id="KW-0963">Cytoplasm</keyword>
<keyword id="KW-0269">Exonuclease</keyword>
<keyword id="KW-0378">Hydrolase</keyword>
<keyword id="KW-0540">Nuclease</keyword>
<keyword id="KW-1185">Reference proteome</keyword>
<sequence>MTEPDSKPKKGRAGRKKAEPVRPPEQFLELAELLDYVGQVIARGVPGGVWVRAEIASLTDRRHLYLDLVQAGEGGAGGVGEVAKCRATVWARERFALEAKFRGATSGATLSAGLKVLLFGTAEFHPQYGFSFNVLDISPEYTLGDAALRLEAMRAELVAEGSYGLNRLLPVPTDFARVAVIAPREAAGLGDFRREADPLEAAGLVEFHYLEATFQGREAGASLLRAVAAARELHQEKALDALFVIRGGGAVTDLAWLNDLELARALATFPAPVVTGLGHARDDTLPDEVACLRTDTPSKAAAYLVRTVVNAAAQAQEAARTIRAEAARVLVEAEAAAAWARDRALSSAVRRVDAAAAEVDALMRQALGLTPQRTLARGYALVRDAAGQPVTRAAGARAGEPLTLEWSDGSVPVRVE</sequence>
<evidence type="ECO:0000255" key="1">
    <source>
        <dbReference type="HAMAP-Rule" id="MF_00378"/>
    </source>
</evidence>
<evidence type="ECO:0000256" key="2">
    <source>
        <dbReference type="SAM" id="MobiDB-lite"/>
    </source>
</evidence>
<name>EX7L_DEIRA</name>
<comment type="function">
    <text evidence="1">Bidirectionally degrades single-stranded DNA into large acid-insoluble oligonucleotides, which are then degraded further into small acid-soluble oligonucleotides.</text>
</comment>
<comment type="catalytic activity">
    <reaction evidence="1">
        <text>Exonucleolytic cleavage in either 5'- to 3'- or 3'- to 5'-direction to yield nucleoside 5'-phosphates.</text>
        <dbReference type="EC" id="3.1.11.6"/>
    </reaction>
</comment>
<comment type="subunit">
    <text evidence="1">Heterooligomer composed of large and small subunits.</text>
</comment>
<comment type="subcellular location">
    <subcellularLocation>
        <location evidence="1">Cytoplasm</location>
    </subcellularLocation>
</comment>
<comment type="similarity">
    <text evidence="1">Belongs to the XseA family.</text>
</comment>
<accession>Q9RXW9</accession>
<proteinExistence type="inferred from homology"/>
<dbReference type="EC" id="3.1.11.6" evidence="1"/>
<dbReference type="EMBL" id="AE000513">
    <property type="protein sequence ID" value="AAF09773.1"/>
    <property type="molecule type" value="Genomic_DNA"/>
</dbReference>
<dbReference type="PIR" id="C75549">
    <property type="entry name" value="C75549"/>
</dbReference>
<dbReference type="RefSeq" id="NP_293910.1">
    <property type="nucleotide sequence ID" value="NC_001263.1"/>
</dbReference>
<dbReference type="RefSeq" id="WP_010886832.1">
    <property type="nucleotide sequence ID" value="NC_001263.1"/>
</dbReference>
<dbReference type="SMR" id="Q9RXW9"/>
<dbReference type="FunCoup" id="Q9RXW9">
    <property type="interactions" value="363"/>
</dbReference>
<dbReference type="STRING" id="243230.DR_0186"/>
<dbReference type="PaxDb" id="243230-DR_0186"/>
<dbReference type="EnsemblBacteria" id="AAF09773">
    <property type="protein sequence ID" value="AAF09773"/>
    <property type="gene ID" value="DR_0186"/>
</dbReference>
<dbReference type="GeneID" id="69516417"/>
<dbReference type="KEGG" id="dra:DR_0186"/>
<dbReference type="PATRIC" id="fig|243230.17.peg.350"/>
<dbReference type="eggNOG" id="COG1570">
    <property type="taxonomic scope" value="Bacteria"/>
</dbReference>
<dbReference type="HOGENOM" id="CLU_023625_4_2_0"/>
<dbReference type="InParanoid" id="Q9RXW9"/>
<dbReference type="OrthoDB" id="9802795at2"/>
<dbReference type="Proteomes" id="UP000002524">
    <property type="component" value="Chromosome 1"/>
</dbReference>
<dbReference type="GO" id="GO:0005737">
    <property type="term" value="C:cytoplasm"/>
    <property type="evidence" value="ECO:0007669"/>
    <property type="project" value="UniProtKB-SubCell"/>
</dbReference>
<dbReference type="GO" id="GO:0009318">
    <property type="term" value="C:exodeoxyribonuclease VII complex"/>
    <property type="evidence" value="ECO:0007669"/>
    <property type="project" value="InterPro"/>
</dbReference>
<dbReference type="GO" id="GO:0008855">
    <property type="term" value="F:exodeoxyribonuclease VII activity"/>
    <property type="evidence" value="ECO:0007669"/>
    <property type="project" value="UniProtKB-UniRule"/>
</dbReference>
<dbReference type="GO" id="GO:0003676">
    <property type="term" value="F:nucleic acid binding"/>
    <property type="evidence" value="ECO:0007669"/>
    <property type="project" value="InterPro"/>
</dbReference>
<dbReference type="GO" id="GO:0006308">
    <property type="term" value="P:DNA catabolic process"/>
    <property type="evidence" value="ECO:0007669"/>
    <property type="project" value="UniProtKB-UniRule"/>
</dbReference>
<dbReference type="CDD" id="cd04489">
    <property type="entry name" value="ExoVII_LU_OBF"/>
    <property type="match status" value="1"/>
</dbReference>
<dbReference type="HAMAP" id="MF_00378">
    <property type="entry name" value="Exonuc_7_L"/>
    <property type="match status" value="1"/>
</dbReference>
<dbReference type="InterPro" id="IPR003753">
    <property type="entry name" value="Exonuc_VII_L"/>
</dbReference>
<dbReference type="InterPro" id="IPR020579">
    <property type="entry name" value="Exonuc_VII_lsu_C"/>
</dbReference>
<dbReference type="InterPro" id="IPR025824">
    <property type="entry name" value="OB-fold_nuc-bd_dom"/>
</dbReference>
<dbReference type="NCBIfam" id="TIGR00237">
    <property type="entry name" value="xseA"/>
    <property type="match status" value="1"/>
</dbReference>
<dbReference type="PANTHER" id="PTHR30008">
    <property type="entry name" value="EXODEOXYRIBONUCLEASE 7 LARGE SUBUNIT"/>
    <property type="match status" value="1"/>
</dbReference>
<dbReference type="PANTHER" id="PTHR30008:SF0">
    <property type="entry name" value="EXODEOXYRIBONUCLEASE 7 LARGE SUBUNIT"/>
    <property type="match status" value="1"/>
</dbReference>
<dbReference type="Pfam" id="PF02601">
    <property type="entry name" value="Exonuc_VII_L"/>
    <property type="match status" value="1"/>
</dbReference>
<dbReference type="Pfam" id="PF13742">
    <property type="entry name" value="tRNA_anti_2"/>
    <property type="match status" value="1"/>
</dbReference>
<feature type="chain" id="PRO_0000197844" description="Exodeoxyribonuclease 7 large subunit">
    <location>
        <begin position="1"/>
        <end position="416"/>
    </location>
</feature>
<feature type="region of interest" description="Disordered" evidence="2">
    <location>
        <begin position="1"/>
        <end position="21"/>
    </location>
</feature>
<organism>
    <name type="scientific">Deinococcus radiodurans (strain ATCC 13939 / DSM 20539 / JCM 16871 / CCUG 27074 / LMG 4051 / NBRC 15346 / NCIMB 9279 / VKM B-1422 / R1)</name>
    <dbReference type="NCBI Taxonomy" id="243230"/>
    <lineage>
        <taxon>Bacteria</taxon>
        <taxon>Thermotogati</taxon>
        <taxon>Deinococcota</taxon>
        <taxon>Deinococci</taxon>
        <taxon>Deinococcales</taxon>
        <taxon>Deinococcaceae</taxon>
        <taxon>Deinococcus</taxon>
    </lineage>
</organism>